<protein>
    <recommendedName>
        <fullName>Laminin subunit gamma-3</fullName>
    </recommendedName>
    <alternativeName>
        <fullName>Laminin-12 subunit gamma</fullName>
    </alternativeName>
    <alternativeName>
        <fullName>Laminin-14 subunit gamma</fullName>
    </alternativeName>
    <alternativeName>
        <fullName>Laminin-15 subunit gamma</fullName>
    </alternativeName>
</protein>
<feature type="signal peptide" evidence="1">
    <location>
        <begin position="1"/>
        <end position="19"/>
    </location>
</feature>
<feature type="chain" id="PRO_0000017079" description="Laminin subunit gamma-3">
    <location>
        <begin position="20"/>
        <end position="1575"/>
    </location>
</feature>
<feature type="domain" description="Laminin N-terminal" evidence="4">
    <location>
        <begin position="31"/>
        <end position="270"/>
    </location>
</feature>
<feature type="domain" description="Laminin EGF-like 1" evidence="3">
    <location>
        <begin position="271"/>
        <end position="326"/>
    </location>
</feature>
<feature type="domain" description="Laminin EGF-like 2" evidence="3">
    <location>
        <begin position="327"/>
        <end position="382"/>
    </location>
</feature>
<feature type="domain" description="Laminin EGF-like 3" evidence="3">
    <location>
        <begin position="383"/>
        <end position="429"/>
    </location>
</feature>
<feature type="domain" description="Laminin EGF-like 4" evidence="3">
    <location>
        <begin position="430"/>
        <end position="479"/>
    </location>
</feature>
<feature type="domain" description="Laminin EGF-like 5; first part" evidence="3">
    <location>
        <begin position="480"/>
        <end position="489"/>
    </location>
</feature>
<feature type="domain" description="Laminin IV type A" evidence="2">
    <location>
        <begin position="499"/>
        <end position="672"/>
    </location>
</feature>
<feature type="domain" description="Laminin EGF-like 5; second part" evidence="3">
    <location>
        <begin position="673"/>
        <end position="706"/>
    </location>
</feature>
<feature type="domain" description="Laminin EGF-like 6" evidence="3">
    <location>
        <begin position="707"/>
        <end position="754"/>
    </location>
</feature>
<feature type="domain" description="Laminin EGF-like 7" evidence="3">
    <location>
        <begin position="755"/>
        <end position="809"/>
    </location>
</feature>
<feature type="domain" description="Laminin EGF-like 8" evidence="3">
    <location>
        <begin position="810"/>
        <end position="865"/>
    </location>
</feature>
<feature type="domain" description="Laminin EGF-like 9" evidence="3">
    <location>
        <begin position="866"/>
        <end position="916"/>
    </location>
</feature>
<feature type="domain" description="Laminin EGF-like 10" evidence="3">
    <location>
        <begin position="917"/>
        <end position="964"/>
    </location>
</feature>
<feature type="domain" description="Laminin EGF-like 11" evidence="3">
    <location>
        <begin position="965"/>
        <end position="1013"/>
    </location>
</feature>
<feature type="region of interest" description="Domain II and I">
    <location>
        <begin position="1014"/>
        <end position="1575"/>
    </location>
</feature>
<feature type="region of interest" description="Disordered" evidence="5">
    <location>
        <begin position="1378"/>
        <end position="1399"/>
    </location>
</feature>
<feature type="coiled-coil region" evidence="1">
    <location>
        <begin position="1073"/>
        <end position="1134"/>
    </location>
</feature>
<feature type="coiled-coil region" evidence="1">
    <location>
        <begin position="1201"/>
        <end position="1228"/>
    </location>
</feature>
<feature type="coiled-coil region" evidence="1">
    <location>
        <begin position="1410"/>
        <end position="1492"/>
    </location>
</feature>
<feature type="coiled-coil region" evidence="1">
    <location>
        <begin position="1523"/>
        <end position="1567"/>
    </location>
</feature>
<feature type="short sequence motif" description="Cell attachment site" evidence="1">
    <location>
        <begin position="1059"/>
        <end position="1061"/>
    </location>
</feature>
<feature type="glycosylation site" description="N-linked (GlcNAc...) asparagine" evidence="1">
    <location>
        <position position="87"/>
    </location>
</feature>
<feature type="glycosylation site" description="N-linked (GlcNAc...) asparagine" evidence="1">
    <location>
        <position position="119"/>
    </location>
</feature>
<feature type="glycosylation site" description="N-linked (GlcNAc...) asparagine" evidence="1">
    <location>
        <position position="295"/>
    </location>
</feature>
<feature type="glycosylation site" description="N-linked (GlcNAc...) asparagine" evidence="1">
    <location>
        <position position="328"/>
    </location>
</feature>
<feature type="glycosylation site" description="N-linked (GlcNAc...) asparagine" evidence="1">
    <location>
        <position position="631"/>
    </location>
</feature>
<feature type="glycosylation site" description="N-linked (GlcNAc...) asparagine" evidence="1">
    <location>
        <position position="837"/>
    </location>
</feature>
<feature type="glycosylation site" description="N-linked (GlcNAc...) asparagine" evidence="1">
    <location>
        <position position="980"/>
    </location>
</feature>
<feature type="glycosylation site" description="N-linked (GlcNAc...) asparagine" evidence="1">
    <location>
        <position position="1185"/>
    </location>
</feature>
<feature type="disulfide bond" evidence="3">
    <location>
        <begin position="271"/>
        <end position="280"/>
    </location>
</feature>
<feature type="disulfide bond" evidence="3">
    <location>
        <begin position="273"/>
        <end position="290"/>
    </location>
</feature>
<feature type="disulfide bond" evidence="3">
    <location>
        <begin position="292"/>
        <end position="301"/>
    </location>
</feature>
<feature type="disulfide bond" evidence="3">
    <location>
        <begin position="304"/>
        <end position="324"/>
    </location>
</feature>
<feature type="disulfide bond" evidence="3">
    <location>
        <begin position="327"/>
        <end position="336"/>
    </location>
</feature>
<feature type="disulfide bond" evidence="3">
    <location>
        <begin position="329"/>
        <end position="352"/>
    </location>
</feature>
<feature type="disulfide bond" evidence="3">
    <location>
        <begin position="355"/>
        <end position="364"/>
    </location>
</feature>
<feature type="disulfide bond" evidence="3">
    <location>
        <begin position="367"/>
        <end position="380"/>
    </location>
</feature>
<feature type="disulfide bond" evidence="3">
    <location>
        <begin position="383"/>
        <end position="395"/>
    </location>
</feature>
<feature type="disulfide bond" evidence="3">
    <location>
        <begin position="385"/>
        <end position="401"/>
    </location>
</feature>
<feature type="disulfide bond" evidence="3">
    <location>
        <begin position="403"/>
        <end position="412"/>
    </location>
</feature>
<feature type="disulfide bond" evidence="3">
    <location>
        <begin position="415"/>
        <end position="427"/>
    </location>
</feature>
<feature type="disulfide bond" evidence="3">
    <location>
        <begin position="430"/>
        <end position="441"/>
    </location>
</feature>
<feature type="disulfide bond" evidence="3">
    <location>
        <begin position="432"/>
        <end position="448"/>
    </location>
</feature>
<feature type="disulfide bond" evidence="3">
    <location>
        <begin position="450"/>
        <end position="459"/>
    </location>
</feature>
<feature type="disulfide bond" evidence="3">
    <location>
        <begin position="462"/>
        <end position="477"/>
    </location>
</feature>
<feature type="disulfide bond" evidence="3">
    <location>
        <begin position="707"/>
        <end position="715"/>
    </location>
</feature>
<feature type="disulfide bond" evidence="3">
    <location>
        <begin position="709"/>
        <end position="722"/>
    </location>
</feature>
<feature type="disulfide bond" evidence="3">
    <location>
        <begin position="724"/>
        <end position="733"/>
    </location>
</feature>
<feature type="disulfide bond" evidence="3">
    <location>
        <begin position="736"/>
        <end position="752"/>
    </location>
</feature>
<feature type="disulfide bond" evidence="3">
    <location>
        <begin position="755"/>
        <end position="763"/>
    </location>
</feature>
<feature type="disulfide bond" evidence="3">
    <location>
        <begin position="757"/>
        <end position="774"/>
    </location>
</feature>
<feature type="disulfide bond" evidence="3">
    <location>
        <begin position="777"/>
        <end position="786"/>
    </location>
</feature>
<feature type="disulfide bond" evidence="3">
    <location>
        <begin position="789"/>
        <end position="807"/>
    </location>
</feature>
<feature type="disulfide bond" evidence="3">
    <location>
        <begin position="810"/>
        <end position="824"/>
    </location>
</feature>
<feature type="disulfide bond" evidence="3">
    <location>
        <begin position="812"/>
        <end position="831"/>
    </location>
</feature>
<feature type="disulfide bond" evidence="3">
    <location>
        <begin position="834"/>
        <end position="843"/>
    </location>
</feature>
<feature type="disulfide bond" evidence="3">
    <location>
        <begin position="846"/>
        <end position="863"/>
    </location>
</feature>
<feature type="disulfide bond" evidence="3">
    <location>
        <begin position="866"/>
        <end position="880"/>
    </location>
</feature>
<feature type="disulfide bond" evidence="3">
    <location>
        <begin position="868"/>
        <end position="887"/>
    </location>
</feature>
<feature type="disulfide bond" evidence="3">
    <location>
        <begin position="889"/>
        <end position="898"/>
    </location>
</feature>
<feature type="disulfide bond" evidence="3">
    <location>
        <begin position="901"/>
        <end position="914"/>
    </location>
</feature>
<feature type="disulfide bond" evidence="3">
    <location>
        <begin position="917"/>
        <end position="929"/>
    </location>
</feature>
<feature type="disulfide bond" evidence="3">
    <location>
        <begin position="919"/>
        <end position="936"/>
    </location>
</feature>
<feature type="disulfide bond" evidence="3">
    <location>
        <begin position="938"/>
        <end position="947"/>
    </location>
</feature>
<feature type="disulfide bond" evidence="3">
    <location>
        <begin position="950"/>
        <end position="962"/>
    </location>
</feature>
<feature type="disulfide bond" evidence="3">
    <location>
        <begin position="965"/>
        <end position="977"/>
    </location>
</feature>
<feature type="disulfide bond" evidence="3">
    <location>
        <begin position="967"/>
        <end position="983"/>
    </location>
</feature>
<feature type="disulfide bond" evidence="3">
    <location>
        <begin position="985"/>
        <end position="994"/>
    </location>
</feature>
<feature type="disulfide bond" evidence="3">
    <location>
        <begin position="997"/>
        <end position="1010"/>
    </location>
</feature>
<feature type="sequence variant" id="VAR_066404" description="In OCCM; dbSNP:rs571785750." evidence="7">
    <original>G</original>
    <variation>R</variation>
    <location>
        <position position="350"/>
    </location>
</feature>
<feature type="sequence variant" id="VAR_056145" description="In dbSNP:rs869457." evidence="6">
    <original>P</original>
    <variation>S</variation>
    <location>
        <position position="522"/>
    </location>
</feature>
<feature type="sequence variant" id="VAR_056146" description="In dbSNP:rs10901333." evidence="6 8">
    <original>E</original>
    <variation>G</variation>
    <location>
        <position position="544"/>
    </location>
</feature>
<feature type="sequence variant" id="VAR_056147" description="In dbSNP:rs3739510." evidence="6 8">
    <original>R</original>
    <variation>G</variation>
    <location>
        <position position="770"/>
    </location>
</feature>
<feature type="sequence variant" id="VAR_056148" description="In dbSNP:rs2275140." evidence="6 8">
    <original>S</original>
    <variation>G</variation>
    <location>
        <position position="1082"/>
    </location>
</feature>
<feature type="sequence variant" id="VAR_056149" description="In dbSNP:rs11244275.">
    <original>R</original>
    <variation>W</variation>
    <location>
        <position position="1264"/>
    </location>
</feature>
<feature type="sequence conflict" description="In Ref. 1; AAD36991." evidence="9" ref="1">
    <original>F</original>
    <variation>S</variation>
    <location>
        <position position="957"/>
    </location>
</feature>
<feature type="sequence conflict" description="In Ref. 1; AAD36991." evidence="9" ref="1">
    <original>E</original>
    <variation>Y</variation>
    <location>
        <position position="979"/>
    </location>
</feature>
<feature type="sequence conflict" description="In Ref. 1; AAD36991." evidence="9" ref="1">
    <original>D</original>
    <variation>Y</variation>
    <location>
        <position position="999"/>
    </location>
</feature>
<feature type="sequence conflict" description="In Ref. 1; AAD36991." evidence="9" ref="1">
    <original>A</original>
    <variation>T</variation>
    <location>
        <position position="1024"/>
    </location>
</feature>
<feature type="sequence conflict" description="In Ref. 1; AAD36991." evidence="9" ref="1">
    <original>T</original>
    <variation>I</variation>
    <location>
        <position position="1157"/>
    </location>
</feature>
<feature type="sequence conflict" description="In Ref. 1; AAD36991." evidence="9" ref="1">
    <original>K</original>
    <variation>MARSRLTATFASQ</variation>
    <location>
        <position position="1309"/>
    </location>
</feature>
<feature type="sequence conflict" description="In Ref. 1; AAD36991." evidence="9" ref="1">
    <original>E</original>
    <variation>G</variation>
    <location>
        <position position="1313"/>
    </location>
</feature>
<feature type="sequence conflict" description="In Ref. 3; BAD92124." evidence="9" ref="3">
    <original>T</original>
    <variation>M</variation>
    <location>
        <position position="1433"/>
    </location>
</feature>
<name>LAMC3_HUMAN</name>
<proteinExistence type="evidence at protein level"/>
<organism>
    <name type="scientific">Homo sapiens</name>
    <name type="common">Human</name>
    <dbReference type="NCBI Taxonomy" id="9606"/>
    <lineage>
        <taxon>Eukaryota</taxon>
        <taxon>Metazoa</taxon>
        <taxon>Chordata</taxon>
        <taxon>Craniata</taxon>
        <taxon>Vertebrata</taxon>
        <taxon>Euteleostomi</taxon>
        <taxon>Mammalia</taxon>
        <taxon>Eutheria</taxon>
        <taxon>Euarchontoglires</taxon>
        <taxon>Primates</taxon>
        <taxon>Haplorrhini</taxon>
        <taxon>Catarrhini</taxon>
        <taxon>Hominidae</taxon>
        <taxon>Homo</taxon>
    </lineage>
</organism>
<accession>Q9Y6N6</accession>
<accession>B1APX9</accession>
<accession>B1APY0</accession>
<accession>Q59H72</accession>
<evidence type="ECO:0000255" key="1"/>
<evidence type="ECO:0000255" key="2">
    <source>
        <dbReference type="PROSITE-ProRule" id="PRU00458"/>
    </source>
</evidence>
<evidence type="ECO:0000255" key="3">
    <source>
        <dbReference type="PROSITE-ProRule" id="PRU00460"/>
    </source>
</evidence>
<evidence type="ECO:0000255" key="4">
    <source>
        <dbReference type="PROSITE-ProRule" id="PRU00466"/>
    </source>
</evidence>
<evidence type="ECO:0000256" key="5">
    <source>
        <dbReference type="SAM" id="MobiDB-lite"/>
    </source>
</evidence>
<evidence type="ECO:0000269" key="6">
    <source>
    </source>
</evidence>
<evidence type="ECO:0000269" key="7">
    <source>
    </source>
</evidence>
<evidence type="ECO:0000269" key="8">
    <source ref="3"/>
</evidence>
<evidence type="ECO:0000305" key="9"/>
<reference key="1">
    <citation type="journal article" date="1999" name="J. Cell Biol.">
        <title>Characterization and expression of the laminin gamma3 chain: a novel, non-basement membrane-associated, laminin chain.</title>
        <authorList>
            <person name="Koch M."/>
            <person name="Olson P.F."/>
            <person name="Albus A."/>
            <person name="Jin W."/>
            <person name="Hunter D.D."/>
            <person name="Brunken W.J."/>
            <person name="Burgeson R.E."/>
            <person name="Champliaud M.-F."/>
        </authorList>
    </citation>
    <scope>NUCLEOTIDE SEQUENCE [MRNA]</scope>
    <scope>VARIANTS SER-522; GLY-544; GLY-770 AND GLY-1082</scope>
    <source>
        <tissue>Placenta</tissue>
    </source>
</reference>
<reference key="2">
    <citation type="journal article" date="2004" name="Nature">
        <title>DNA sequence and analysis of human chromosome 9.</title>
        <authorList>
            <person name="Humphray S.J."/>
            <person name="Oliver K."/>
            <person name="Hunt A.R."/>
            <person name="Plumb R.W."/>
            <person name="Loveland J.E."/>
            <person name="Howe K.L."/>
            <person name="Andrews T.D."/>
            <person name="Searle S."/>
            <person name="Hunt S.E."/>
            <person name="Scott C.E."/>
            <person name="Jones M.C."/>
            <person name="Ainscough R."/>
            <person name="Almeida J.P."/>
            <person name="Ambrose K.D."/>
            <person name="Ashwell R.I.S."/>
            <person name="Babbage A.K."/>
            <person name="Babbage S."/>
            <person name="Bagguley C.L."/>
            <person name="Bailey J."/>
            <person name="Banerjee R."/>
            <person name="Barker D.J."/>
            <person name="Barlow K.F."/>
            <person name="Bates K."/>
            <person name="Beasley H."/>
            <person name="Beasley O."/>
            <person name="Bird C.P."/>
            <person name="Bray-Allen S."/>
            <person name="Brown A.J."/>
            <person name="Brown J.Y."/>
            <person name="Burford D."/>
            <person name="Burrill W."/>
            <person name="Burton J."/>
            <person name="Carder C."/>
            <person name="Carter N.P."/>
            <person name="Chapman J.C."/>
            <person name="Chen Y."/>
            <person name="Clarke G."/>
            <person name="Clark S.Y."/>
            <person name="Clee C.M."/>
            <person name="Clegg S."/>
            <person name="Collier R.E."/>
            <person name="Corby N."/>
            <person name="Crosier M."/>
            <person name="Cummings A.T."/>
            <person name="Davies J."/>
            <person name="Dhami P."/>
            <person name="Dunn M."/>
            <person name="Dutta I."/>
            <person name="Dyer L.W."/>
            <person name="Earthrowl M.E."/>
            <person name="Faulkner L."/>
            <person name="Fleming C.J."/>
            <person name="Frankish A."/>
            <person name="Frankland J.A."/>
            <person name="French L."/>
            <person name="Fricker D.G."/>
            <person name="Garner P."/>
            <person name="Garnett J."/>
            <person name="Ghori J."/>
            <person name="Gilbert J.G.R."/>
            <person name="Glison C."/>
            <person name="Grafham D.V."/>
            <person name="Gribble S."/>
            <person name="Griffiths C."/>
            <person name="Griffiths-Jones S."/>
            <person name="Grocock R."/>
            <person name="Guy J."/>
            <person name="Hall R.E."/>
            <person name="Hammond S."/>
            <person name="Harley J.L."/>
            <person name="Harrison E.S.I."/>
            <person name="Hart E.A."/>
            <person name="Heath P.D."/>
            <person name="Henderson C.D."/>
            <person name="Hopkins B.L."/>
            <person name="Howard P.J."/>
            <person name="Howden P.J."/>
            <person name="Huckle E."/>
            <person name="Johnson C."/>
            <person name="Johnson D."/>
            <person name="Joy A.A."/>
            <person name="Kay M."/>
            <person name="Keenan S."/>
            <person name="Kershaw J.K."/>
            <person name="Kimberley A.M."/>
            <person name="King A."/>
            <person name="Knights A."/>
            <person name="Laird G.K."/>
            <person name="Langford C."/>
            <person name="Lawlor S."/>
            <person name="Leongamornlert D.A."/>
            <person name="Leversha M."/>
            <person name="Lloyd C."/>
            <person name="Lloyd D.M."/>
            <person name="Lovell J."/>
            <person name="Martin S."/>
            <person name="Mashreghi-Mohammadi M."/>
            <person name="Matthews L."/>
            <person name="McLaren S."/>
            <person name="McLay K.E."/>
            <person name="McMurray A."/>
            <person name="Milne S."/>
            <person name="Nickerson T."/>
            <person name="Nisbett J."/>
            <person name="Nordsiek G."/>
            <person name="Pearce A.V."/>
            <person name="Peck A.I."/>
            <person name="Porter K.M."/>
            <person name="Pandian R."/>
            <person name="Pelan S."/>
            <person name="Phillimore B."/>
            <person name="Povey S."/>
            <person name="Ramsey Y."/>
            <person name="Rand V."/>
            <person name="Scharfe M."/>
            <person name="Sehra H.K."/>
            <person name="Shownkeen R."/>
            <person name="Sims S.K."/>
            <person name="Skuce C.D."/>
            <person name="Smith M."/>
            <person name="Steward C.A."/>
            <person name="Swarbreck D."/>
            <person name="Sycamore N."/>
            <person name="Tester J."/>
            <person name="Thorpe A."/>
            <person name="Tracey A."/>
            <person name="Tromans A."/>
            <person name="Thomas D.W."/>
            <person name="Wall M."/>
            <person name="Wallis J.M."/>
            <person name="West A.P."/>
            <person name="Whitehead S.L."/>
            <person name="Willey D.L."/>
            <person name="Williams S.A."/>
            <person name="Wilming L."/>
            <person name="Wray P.W."/>
            <person name="Young L."/>
            <person name="Ashurst J.L."/>
            <person name="Coulson A."/>
            <person name="Blocker H."/>
            <person name="Durbin R.M."/>
            <person name="Sulston J.E."/>
            <person name="Hubbard T."/>
            <person name="Jackson M.J."/>
            <person name="Bentley D.R."/>
            <person name="Beck S."/>
            <person name="Rogers J."/>
            <person name="Dunham I."/>
        </authorList>
    </citation>
    <scope>NUCLEOTIDE SEQUENCE [LARGE SCALE GENOMIC DNA]</scope>
</reference>
<reference key="3">
    <citation type="submission" date="2005-03" db="EMBL/GenBank/DDBJ databases">
        <title>Homo sapiens protein coding cDNA.</title>
        <authorList>
            <person name="Totoki Y."/>
            <person name="Toyoda A."/>
            <person name="Takeda T."/>
            <person name="Sakaki Y."/>
            <person name="Tanaka A."/>
            <person name="Yokoyama S."/>
            <person name="Ohara O."/>
            <person name="Nagase T."/>
            <person name="Kikuno R.F."/>
        </authorList>
    </citation>
    <scope>NUCLEOTIDE SEQUENCE [LARGE SCALE MRNA] OF 197-1575</scope>
    <scope>VARIANTS GLY-544; GLY-770 AND GLY-1082</scope>
    <source>
        <tissue>Spleen</tissue>
    </source>
</reference>
<reference key="4">
    <citation type="journal article" date="2011" name="Nat. Genet.">
        <title>Recessive LAMC3 mutations cause malformations of occipital cortical development.</title>
        <authorList>
            <person name="Barak T."/>
            <person name="Kwan K.Y."/>
            <person name="Louvi A."/>
            <person name="Demirbilek V."/>
            <person name="Saygi S."/>
            <person name="Tuysuz B."/>
            <person name="Choi M."/>
            <person name="Boyaci H."/>
            <person name="Doerschner K."/>
            <person name="Zhu Y."/>
            <person name="Kaymakcalan H."/>
            <person name="Yilmaz S."/>
            <person name="Bakircioglu M."/>
            <person name="Caglayan A.O."/>
            <person name="Ozturk A.K."/>
            <person name="Yasuno K."/>
            <person name="Brunken W.J."/>
            <person name="Atalar E."/>
            <person name="Yalcinkaya C."/>
            <person name="Dincer A."/>
            <person name="Bronen R.A."/>
            <person name="Mane S."/>
            <person name="Ozcelik T."/>
            <person name="Lifton R.P."/>
            <person name="Sestan N."/>
            <person name="Bilguvar K."/>
            <person name="Gunel M."/>
        </authorList>
    </citation>
    <scope>VARIANT OCCM ARG-350</scope>
</reference>
<gene>
    <name type="primary">LAMC3</name>
</gene>
<dbReference type="EMBL" id="AF041835">
    <property type="protein sequence ID" value="AAD36991.1"/>
    <property type="status" value="ALT_FRAME"/>
    <property type="molecule type" value="mRNA"/>
</dbReference>
<dbReference type="EMBL" id="AL355872">
    <property type="status" value="NOT_ANNOTATED_CDS"/>
    <property type="molecule type" value="Genomic_DNA"/>
</dbReference>
<dbReference type="EMBL" id="AL583807">
    <property type="status" value="NOT_ANNOTATED_CDS"/>
    <property type="molecule type" value="Genomic_DNA"/>
</dbReference>
<dbReference type="EMBL" id="AB208887">
    <property type="protein sequence ID" value="BAD92124.1"/>
    <property type="molecule type" value="mRNA"/>
</dbReference>
<dbReference type="CCDS" id="CCDS6938.1"/>
<dbReference type="RefSeq" id="NP_006050.3">
    <property type="nucleotide sequence ID" value="NM_006059.3"/>
</dbReference>
<dbReference type="SMR" id="Q9Y6N6"/>
<dbReference type="BioGRID" id="115603">
    <property type="interactions" value="51"/>
</dbReference>
<dbReference type="ComplexPortal" id="CPX-1781">
    <property type="entry name" value="Laminin-213 complex"/>
</dbReference>
<dbReference type="ComplexPortal" id="CPX-1782">
    <property type="entry name" value="Laminin-423 complex"/>
</dbReference>
<dbReference type="ComplexPortal" id="CPX-1784">
    <property type="entry name" value="Laminin-523 complex"/>
</dbReference>
<dbReference type="FunCoup" id="Q9Y6N6">
    <property type="interactions" value="501"/>
</dbReference>
<dbReference type="IntAct" id="Q9Y6N6">
    <property type="interactions" value="41"/>
</dbReference>
<dbReference type="MINT" id="Q9Y6N6"/>
<dbReference type="STRING" id="9606.ENSP00000354360"/>
<dbReference type="ChEMBL" id="CHEMBL2364187"/>
<dbReference type="GlyCosmos" id="Q9Y6N6">
    <property type="glycosylation" value="8 sites, No reported glycans"/>
</dbReference>
<dbReference type="GlyGen" id="Q9Y6N6">
    <property type="glycosylation" value="9 sites, 17 N-linked glycans (5 sites)"/>
</dbReference>
<dbReference type="iPTMnet" id="Q9Y6N6"/>
<dbReference type="PhosphoSitePlus" id="Q9Y6N6"/>
<dbReference type="BioMuta" id="LAMC3"/>
<dbReference type="DMDM" id="308153586"/>
<dbReference type="jPOST" id="Q9Y6N6"/>
<dbReference type="MassIVE" id="Q9Y6N6"/>
<dbReference type="PaxDb" id="9606-ENSP00000354360"/>
<dbReference type="PeptideAtlas" id="Q9Y6N6"/>
<dbReference type="ProteomicsDB" id="86743"/>
<dbReference type="Antibodypedia" id="45184">
    <property type="antibodies" value="142 antibodies from 24 providers"/>
</dbReference>
<dbReference type="DNASU" id="10319"/>
<dbReference type="Ensembl" id="ENST00000361069.9">
    <property type="protein sequence ID" value="ENSP00000354360.4"/>
    <property type="gene ID" value="ENSG00000050555.19"/>
</dbReference>
<dbReference type="GeneID" id="10319"/>
<dbReference type="KEGG" id="hsa:10319"/>
<dbReference type="MANE-Select" id="ENST00000361069.9">
    <property type="protein sequence ID" value="ENSP00000354360.4"/>
    <property type="RefSeq nucleotide sequence ID" value="NM_006059.4"/>
    <property type="RefSeq protein sequence ID" value="NP_006050.3"/>
</dbReference>
<dbReference type="UCSC" id="uc004caa.2">
    <property type="organism name" value="human"/>
</dbReference>
<dbReference type="AGR" id="HGNC:6494"/>
<dbReference type="CTD" id="10319"/>
<dbReference type="DisGeNET" id="10319"/>
<dbReference type="GeneCards" id="LAMC3"/>
<dbReference type="HGNC" id="HGNC:6494">
    <property type="gene designation" value="LAMC3"/>
</dbReference>
<dbReference type="HPA" id="ENSG00000050555">
    <property type="expression patterns" value="Tissue enhanced (placenta)"/>
</dbReference>
<dbReference type="MalaCards" id="LAMC3"/>
<dbReference type="MIM" id="604349">
    <property type="type" value="gene"/>
</dbReference>
<dbReference type="MIM" id="614115">
    <property type="type" value="phenotype"/>
</dbReference>
<dbReference type="neXtProt" id="NX_Q9Y6N6"/>
<dbReference type="OpenTargets" id="ENSG00000050555"/>
<dbReference type="Orphanet" id="280640">
    <property type="disease" value="Occipital pachygyria and polymicrogyria"/>
</dbReference>
<dbReference type="PharmGKB" id="PA30282"/>
<dbReference type="VEuPathDB" id="HostDB:ENSG00000050555"/>
<dbReference type="eggNOG" id="KOG1836">
    <property type="taxonomic scope" value="Eukaryota"/>
</dbReference>
<dbReference type="GeneTree" id="ENSGT00940000161559"/>
<dbReference type="HOGENOM" id="CLU_002471_1_0_1"/>
<dbReference type="InParanoid" id="Q9Y6N6"/>
<dbReference type="OMA" id="GAQKTCT"/>
<dbReference type="OrthoDB" id="430826at2759"/>
<dbReference type="PAN-GO" id="Q9Y6N6">
    <property type="GO annotations" value="5 GO annotations based on evolutionary models"/>
</dbReference>
<dbReference type="PhylomeDB" id="Q9Y6N6"/>
<dbReference type="TreeFam" id="TF352481"/>
<dbReference type="PathwayCommons" id="Q9Y6N6"/>
<dbReference type="Reactome" id="R-HSA-3000157">
    <property type="pathway name" value="Laminin interactions"/>
</dbReference>
<dbReference type="Reactome" id="R-HSA-3000171">
    <property type="pathway name" value="Non-integrin membrane-ECM interactions"/>
</dbReference>
<dbReference type="Reactome" id="R-HSA-8874081">
    <property type="pathway name" value="MET activates PTK2 signaling"/>
</dbReference>
<dbReference type="Reactome" id="R-HSA-9913351">
    <property type="pathway name" value="Formation of the dystrophin-glycoprotein complex (DGC)"/>
</dbReference>
<dbReference type="SignaLink" id="Q9Y6N6"/>
<dbReference type="BioGRID-ORCS" id="10319">
    <property type="hits" value="16 hits in 1144 CRISPR screens"/>
</dbReference>
<dbReference type="ChiTaRS" id="LAMC3">
    <property type="organism name" value="human"/>
</dbReference>
<dbReference type="GeneWiki" id="LAMC3"/>
<dbReference type="GenomeRNAi" id="10319"/>
<dbReference type="Pharos" id="Q9Y6N6">
    <property type="development level" value="Tbio"/>
</dbReference>
<dbReference type="PRO" id="PR:Q9Y6N6"/>
<dbReference type="Proteomes" id="UP000005640">
    <property type="component" value="Chromosome 9"/>
</dbReference>
<dbReference type="RNAct" id="Q9Y6N6">
    <property type="molecule type" value="protein"/>
</dbReference>
<dbReference type="Bgee" id="ENSG00000050555">
    <property type="expression patterns" value="Expressed in endocervix and 125 other cell types or tissues"/>
</dbReference>
<dbReference type="ExpressionAtlas" id="Q9Y6N6">
    <property type="expression patterns" value="baseline and differential"/>
</dbReference>
<dbReference type="GO" id="GO:0005604">
    <property type="term" value="C:basement membrane"/>
    <property type="evidence" value="ECO:0007669"/>
    <property type="project" value="UniProtKB-SubCell"/>
</dbReference>
<dbReference type="GO" id="GO:0031012">
    <property type="term" value="C:extracellular matrix"/>
    <property type="evidence" value="ECO:0000304"/>
    <property type="project" value="ProtInc"/>
</dbReference>
<dbReference type="GO" id="GO:0005576">
    <property type="term" value="C:extracellular region"/>
    <property type="evidence" value="ECO:0000304"/>
    <property type="project" value="Reactome"/>
</dbReference>
<dbReference type="GO" id="GO:0016020">
    <property type="term" value="C:membrane"/>
    <property type="evidence" value="ECO:0000304"/>
    <property type="project" value="ProtInc"/>
</dbReference>
<dbReference type="GO" id="GO:0005198">
    <property type="term" value="F:structural molecule activity"/>
    <property type="evidence" value="ECO:0000304"/>
    <property type="project" value="ProtInc"/>
</dbReference>
<dbReference type="GO" id="GO:0014002">
    <property type="term" value="P:astrocyte development"/>
    <property type="evidence" value="ECO:0007669"/>
    <property type="project" value="Ensembl"/>
</dbReference>
<dbReference type="GO" id="GO:0007155">
    <property type="term" value="P:cell adhesion"/>
    <property type="evidence" value="ECO:0007669"/>
    <property type="project" value="UniProtKB-KW"/>
</dbReference>
<dbReference type="GO" id="GO:0000902">
    <property type="term" value="P:cell morphogenesis"/>
    <property type="evidence" value="ECO:0007669"/>
    <property type="project" value="Ensembl"/>
</dbReference>
<dbReference type="GO" id="GO:0060041">
    <property type="term" value="P:retina development in camera-type eye"/>
    <property type="evidence" value="ECO:0007669"/>
    <property type="project" value="Ensembl"/>
</dbReference>
<dbReference type="GO" id="GO:0007601">
    <property type="term" value="P:visual perception"/>
    <property type="evidence" value="ECO:0007669"/>
    <property type="project" value="Ensembl"/>
</dbReference>
<dbReference type="CDD" id="cd00055">
    <property type="entry name" value="EGF_Lam"/>
    <property type="match status" value="10"/>
</dbReference>
<dbReference type="FunFam" id="2.10.25.10:FF:000067">
    <property type="entry name" value="Laminin subunit gamma 1"/>
    <property type="match status" value="2"/>
</dbReference>
<dbReference type="FunFam" id="2.10.25.10:FF:000193">
    <property type="entry name" value="Laminin subunit gamma 1"/>
    <property type="match status" value="1"/>
</dbReference>
<dbReference type="FunFam" id="2.60.120.260:FF:000018">
    <property type="entry name" value="Laminin subunit gamma 1"/>
    <property type="match status" value="1"/>
</dbReference>
<dbReference type="FunFam" id="2.10.25.10:FF:000433">
    <property type="entry name" value="Laminin subunit gamma 3"/>
    <property type="match status" value="1"/>
</dbReference>
<dbReference type="FunFam" id="2.10.25.10:FF:000174">
    <property type="entry name" value="Laminin subunit gamma-1"/>
    <property type="match status" value="1"/>
</dbReference>
<dbReference type="FunFam" id="2.10.25.10:FF:000105">
    <property type="entry name" value="laminin subunit gamma-1"/>
    <property type="match status" value="2"/>
</dbReference>
<dbReference type="FunFam" id="2.10.25.10:FF:000163">
    <property type="entry name" value="laminin subunit gamma-1"/>
    <property type="match status" value="1"/>
</dbReference>
<dbReference type="FunFam" id="2.10.25.10:FF:000166">
    <property type="entry name" value="laminin subunit gamma-1"/>
    <property type="match status" value="1"/>
</dbReference>
<dbReference type="Gene3D" id="2.60.120.260">
    <property type="entry name" value="Galactose-binding domain-like"/>
    <property type="match status" value="1"/>
</dbReference>
<dbReference type="Gene3D" id="2.10.25.10">
    <property type="entry name" value="Laminin"/>
    <property type="match status" value="9"/>
</dbReference>
<dbReference type="InterPro" id="IPR000742">
    <property type="entry name" value="EGF-like_dom"/>
</dbReference>
<dbReference type="InterPro" id="IPR050440">
    <property type="entry name" value="Laminin/Netrin_ECM"/>
</dbReference>
<dbReference type="InterPro" id="IPR000034">
    <property type="entry name" value="Laminin_IV"/>
</dbReference>
<dbReference type="InterPro" id="IPR008211">
    <property type="entry name" value="Laminin_N"/>
</dbReference>
<dbReference type="InterPro" id="IPR002049">
    <property type="entry name" value="LE_dom"/>
</dbReference>
<dbReference type="InterPro" id="IPR056863">
    <property type="entry name" value="LMN_ATRN_NET-like_EGF"/>
</dbReference>
<dbReference type="PANTHER" id="PTHR10574:SF406">
    <property type="entry name" value="LAMININ SUBUNIT ALPHA 5"/>
    <property type="match status" value="1"/>
</dbReference>
<dbReference type="PANTHER" id="PTHR10574">
    <property type="entry name" value="NETRIN/LAMININ-RELATED"/>
    <property type="match status" value="1"/>
</dbReference>
<dbReference type="Pfam" id="PF00053">
    <property type="entry name" value="EGF_laminin"/>
    <property type="match status" value="9"/>
</dbReference>
<dbReference type="Pfam" id="PF24973">
    <property type="entry name" value="EGF_LMN_ATRN"/>
    <property type="match status" value="2"/>
</dbReference>
<dbReference type="Pfam" id="PF00052">
    <property type="entry name" value="Laminin_B"/>
    <property type="match status" value="1"/>
</dbReference>
<dbReference type="Pfam" id="PF00055">
    <property type="entry name" value="Laminin_N"/>
    <property type="match status" value="1"/>
</dbReference>
<dbReference type="PRINTS" id="PR00011">
    <property type="entry name" value="EGFLAMININ"/>
</dbReference>
<dbReference type="SMART" id="SM00181">
    <property type="entry name" value="EGF"/>
    <property type="match status" value="6"/>
</dbReference>
<dbReference type="SMART" id="SM00180">
    <property type="entry name" value="EGF_Lam"/>
    <property type="match status" value="11"/>
</dbReference>
<dbReference type="SMART" id="SM00281">
    <property type="entry name" value="LamB"/>
    <property type="match status" value="1"/>
</dbReference>
<dbReference type="SMART" id="SM00136">
    <property type="entry name" value="LamNT"/>
    <property type="match status" value="1"/>
</dbReference>
<dbReference type="SUPFAM" id="SSF57196">
    <property type="entry name" value="EGF/Laminin"/>
    <property type="match status" value="10"/>
</dbReference>
<dbReference type="PROSITE" id="PS00022">
    <property type="entry name" value="EGF_1"/>
    <property type="match status" value="7"/>
</dbReference>
<dbReference type="PROSITE" id="PS01186">
    <property type="entry name" value="EGF_2"/>
    <property type="match status" value="2"/>
</dbReference>
<dbReference type="PROSITE" id="PS01248">
    <property type="entry name" value="EGF_LAM_1"/>
    <property type="match status" value="10"/>
</dbReference>
<dbReference type="PROSITE" id="PS50027">
    <property type="entry name" value="EGF_LAM_2"/>
    <property type="match status" value="10"/>
</dbReference>
<dbReference type="PROSITE" id="PS51115">
    <property type="entry name" value="LAMININ_IVA"/>
    <property type="match status" value="1"/>
</dbReference>
<dbReference type="PROSITE" id="PS51117">
    <property type="entry name" value="LAMININ_NTER"/>
    <property type="match status" value="1"/>
</dbReference>
<keyword id="KW-0084">Basement membrane</keyword>
<keyword id="KW-0130">Cell adhesion</keyword>
<keyword id="KW-0175">Coiled coil</keyword>
<keyword id="KW-0225">Disease variant</keyword>
<keyword id="KW-1015">Disulfide bond</keyword>
<keyword id="KW-0272">Extracellular matrix</keyword>
<keyword id="KW-0325">Glycoprotein</keyword>
<keyword id="KW-0424">Laminin EGF-like domain</keyword>
<keyword id="KW-1267">Proteomics identification</keyword>
<keyword id="KW-1185">Reference proteome</keyword>
<keyword id="KW-0677">Repeat</keyword>
<keyword id="KW-0964">Secreted</keyword>
<keyword id="KW-0732">Signal</keyword>
<sequence length="1575" mass="171227">MAAAALLLGLALLAPRAAGAGMGACYDGAGRPQRCLPVFENAAFGRLAQASHTCGSPPEDFCPHVGAAGAGAHCQRCDAADPQRHHNASYLTDFHSQDESTWWQSPSMAFGVQYPTSVNITLRLGKAYEITYVRLKFHTSRPESFAIYKRSRADGPWEPYQFYSASCQKTYGRPEGQYLRPGEDERVAFCTSEFSDISPLSGGNVAFSTLEGRPSAYNFEESPGLQEWVTSTELLISLDRLNTFGDDIFKDPKVLQSYYYAVSDFSVGGRCKCNGHASECGPDVAGQLACRCQHNTTGTDCERCLPFFQDRPWARGTAEAAHECLPCNCSGRSEECTFDRELFRSTGHGGRCHHCRDHTAGPHCERCQENFYHWDPRMPCQPCDCQSAGSLHLQCDDTGTCACKPTVTGWKCDRCLPGFHSLSEGGCRPCTCNPAGSLDTCDPRSGRCPCKENVEGNLCDRCRPGTFNLQPHNPAGCSSCFCYGHSKVCASTAQFQVHHILSDFHQGAEGWWARSVGGSEHPPQWSPNGVLLSPEDEEELTAPEKFLGDQRFSYGQPLILTFRVPPGDSPLPVQLRLEGTGLALSLRHSSLSGPQDAGHPREVELRFHLQETSEDVAPPLPPFHFQRLLANLTSLRLRVSPGPSPAGPVFLTEVRLTSARPGLSPPASWVEICSCPTGYTGQFCESCAPGYKREMPQGGPYASCVPCTCNQHGTCDPNTGICVCSHHTEGPSCERCLPGFYGNPFAGQADDCQPCPCPGQSACTTIPESREVVCTHCPPGQRGRRCEVCDDGFFGDPLGLFGHPQPCHQCQCSGNVDPNAVGNCDPLSGHCLRCLHNTTGDHCEHCQEGFYGSALAPRPADKCMPCSCHPQGSVSEQMPCDPVTGQCSCLPHVTARDCSRCYPGFFDLQPGRGCRSCKCHPLGSQEDQCHPKTGQCTCRPGVTGQACDRCQLGFFGFSIKGCRACRCSPLGAASAQCHENGTCVCRPGFEGYKCDRCHDNFFLTADGTHCQQCPSCYALVKEEAAKLKARLTLTEGWLQGSDCGSPWGPLDILLGEAPRGDVYQGHHLLPGAREAFLEQMMSLEGAVKAAREQLQRLNKGARCAQAGSQKTCTQLADLEAVLESSEEEILHAAAILASLEIPQEGPSQPTKWSHLATEARALARSHRDTATKIAATAWRALLASNTSYALLWNLLEGRVALETQRDLEDRYQEVQAAQKALRTAVAEVLPEAESVLATVQQVGADTAPYLALLASPGALPQKSRAEDLGLKAKALEKTVASWQHMATEAARTLQTAAQATLRQTEPLTKLHQEARAALTQASSSVQAATVTVMGARTLLADLEGMKLQFPRPKDQAALQRKADSVSDRLLADTRKKTKQAERMLGNAAPLSSSAKKKGREAEVLAKDSAKLAKALLRERKQAHRRASRLTSQTQATLQQASQQVLASEARRQELEEAERVGAGLSEMEQQIRESRISLEKDIETLSELLARLGSLDTHQAPAQALNETQWALERLRLQLGSPGSLQRKLSLLEQESQQQELQIQGFESDLAEIRADKQNLEAILHSLPENCASWQ</sequence>
<comment type="function">
    <text>Binding to cells via a high affinity receptor, laminin is thought to mediate the attachment, migration and organization of cells into tissues during embryonic development by interacting with other extracellular matrix components.</text>
</comment>
<comment type="subunit">
    <text>Laminin is a complex glycoprotein, consisting of three different polypeptide chains (alpha, beta, gamma), which are bound to each other by disulfide bonds into a cross-shaped molecule comprising one long and three short arms with globules at each end. Gamma-3 is a subunit of laminin-12 (laminin-213), laminin-14 (laminin-423) and laminin-15 (laminin-523).</text>
</comment>
<comment type="subcellular location">
    <subcellularLocation>
        <location>Secreted</location>
        <location>Extracellular space</location>
        <location>Extracellular matrix</location>
        <location>Basement membrane</location>
    </subcellularLocation>
</comment>
<comment type="tissue specificity">
    <text>Broadly expressed in: skin, heart, lung, and the reproductive tracts.</text>
</comment>
<comment type="domain">
    <text>The alpha-helical domains I and II are thought to interact with other laminin chains to form a coiled coil structure.</text>
</comment>
<comment type="domain">
    <text>Domain IV is globular.</text>
</comment>
<comment type="disease" evidence="7">
    <disease id="DI-03207">
        <name>Cortical malformations occipital</name>
        <acronym>OCCM</acronym>
        <description>A disease in which affected individuals develop seizures, sometimes associated with transient visual changes. Brain MRI shows both pachygyria and polymicrogyria restricted to the lateral occipital lobes.</description>
        <dbReference type="MIM" id="614115"/>
    </disease>
    <text>The disease is caused by variants affecting the gene represented in this entry.</text>
</comment>
<comment type="sequence caution" evidence="9">
    <conflict type="frameshift">
        <sequence resource="EMBL-CDS" id="AAD36991"/>
    </conflict>
</comment>